<organismHost>
    <name type="scientific">Callithrix</name>
    <dbReference type="NCBI Taxonomy" id="9481"/>
</organismHost>
<organismHost>
    <name type="scientific">Cercopithecus hamlyni</name>
    <name type="common">Owl-faced monkey</name>
    <name type="synonym">Hamlyn's monkey</name>
    <dbReference type="NCBI Taxonomy" id="9536"/>
</organismHost>
<organismHost>
    <name type="scientific">Chlorocebus aethiops</name>
    <name type="common">Green monkey</name>
    <name type="synonym">Cercopithecus aethiops</name>
    <dbReference type="NCBI Taxonomy" id="9534"/>
</organismHost>
<organismHost>
    <name type="scientific">Macaca</name>
    <name type="common">macaques</name>
    <dbReference type="NCBI Taxonomy" id="9539"/>
</organismHost>
<organismHost>
    <name type="scientific">Pan troglodytes</name>
    <name type="common">Chimpanzee</name>
    <dbReference type="NCBI Taxonomy" id="9598"/>
</organismHost>
<dbReference type="EMBL" id="M59286">
    <property type="protein sequence ID" value="AAA45473.1"/>
    <property type="molecule type" value="Genomic_RNA"/>
</dbReference>
<dbReference type="EMBL" id="L07732">
    <property type="status" value="NOT_ANNOTATED_CDS"/>
    <property type="molecule type" value="Genomic_RNA"/>
</dbReference>
<dbReference type="PIR" id="JQ1180">
    <property type="entry name" value="GNNYS2"/>
</dbReference>
<dbReference type="SMR" id="P31788"/>
<dbReference type="Proteomes" id="UP000007633">
    <property type="component" value="Genome"/>
</dbReference>
<dbReference type="GO" id="GO:0033644">
    <property type="term" value="C:host cell membrane"/>
    <property type="evidence" value="ECO:0007669"/>
    <property type="project" value="UniProtKB-SubCell"/>
</dbReference>
<dbReference type="GO" id="GO:0072494">
    <property type="term" value="C:host multivesicular body"/>
    <property type="evidence" value="ECO:0007669"/>
    <property type="project" value="UniProtKB-SubCell"/>
</dbReference>
<dbReference type="GO" id="GO:0016020">
    <property type="term" value="C:membrane"/>
    <property type="evidence" value="ECO:0007669"/>
    <property type="project" value="UniProtKB-KW"/>
</dbReference>
<dbReference type="GO" id="GO:0039618">
    <property type="term" value="C:T=pseudo3 icosahedral viral capsid"/>
    <property type="evidence" value="ECO:0007669"/>
    <property type="project" value="UniProtKB-KW"/>
</dbReference>
<dbReference type="GO" id="GO:0015267">
    <property type="term" value="F:channel activity"/>
    <property type="evidence" value="ECO:0007669"/>
    <property type="project" value="UniProtKB-KW"/>
</dbReference>
<dbReference type="GO" id="GO:0005198">
    <property type="term" value="F:structural molecule activity"/>
    <property type="evidence" value="ECO:0007669"/>
    <property type="project" value="InterPro"/>
</dbReference>
<dbReference type="GO" id="GO:0034220">
    <property type="term" value="P:monoatomic ion transmembrane transport"/>
    <property type="evidence" value="ECO:0007669"/>
    <property type="project" value="UniProtKB-KW"/>
</dbReference>
<dbReference type="GO" id="GO:0046718">
    <property type="term" value="P:symbiont entry into host cell"/>
    <property type="evidence" value="ECO:0007669"/>
    <property type="project" value="UniProtKB-KW"/>
</dbReference>
<dbReference type="GO" id="GO:0019062">
    <property type="term" value="P:virion attachment to host cell"/>
    <property type="evidence" value="ECO:0007669"/>
    <property type="project" value="UniProtKB-KW"/>
</dbReference>
<dbReference type="CDD" id="cd00205">
    <property type="entry name" value="rhv_like"/>
    <property type="match status" value="2"/>
</dbReference>
<dbReference type="Gene3D" id="2.60.120.20">
    <property type="match status" value="3"/>
</dbReference>
<dbReference type="InterPro" id="IPR024354">
    <property type="entry name" value="Hepatitis_A_VP1-2A"/>
</dbReference>
<dbReference type="InterPro" id="IPR001676">
    <property type="entry name" value="Picornavirus_capsid"/>
</dbReference>
<dbReference type="InterPro" id="IPR033703">
    <property type="entry name" value="Rhv-like"/>
</dbReference>
<dbReference type="InterPro" id="IPR029053">
    <property type="entry name" value="Viral_coat"/>
</dbReference>
<dbReference type="Pfam" id="PF12944">
    <property type="entry name" value="HAV_VP"/>
    <property type="match status" value="1"/>
</dbReference>
<dbReference type="Pfam" id="PF00073">
    <property type="entry name" value="Rhv"/>
    <property type="match status" value="2"/>
</dbReference>
<dbReference type="SUPFAM" id="SSF88633">
    <property type="entry name" value="Positive stranded ssRNA viruses"/>
    <property type="match status" value="3"/>
</dbReference>
<sequence length="839" mass="93825">MNMARQGLFQTVGSGLDHILSLADVEEEQMIQSVDRTAVTGASYFTSVDQSSVHTAEVGSHQSEPLKTSVDKPGSKKTQGEKFFLIHSADWLSTHALFHEVAKLDVVSLLYNEQFAVQGLLRYHTYARFGIEIQVQINPTPFQQGGLICAMVPGDQGYGSIASLTVYPHGLLNCNINNVVRIKVPFIYTRGAYHFKDPQYPVWELTIRVWSEFNIGTGTSAYTSLNVLARFTDLELHGLTPLSTQMMRNEFRVSTTENVVNLSNYEDARAKMSFALDQENWRSDPSEGGGIKITHFSTWTSIPTLAAQFAFNASASVGQQIKVIPVDPYFYQMTNSNPDQKYITALASICQMFCFWRGDLVFDFQVFPTKYHSGRLQFCFVPGNELIEVTSITLKQATTAPCAVMDITGVQSTLRFRVPWISDTPYRVNCYIKSSHQKGEYTAIEKLIVYCYNRLTSPSNVASHVRVNVYLSAINLECFAPLYHAMDVTSQTGDDSGGFSTTVSTEQNVPDPQVGITTPKDLKGKANKGKMDVSGVQAPVGAITTIEDPVLAKKVPETFPELKPGESRHTSDHMSVYKFMGRSHFLCTFTFNANNREYTFPITLSSTSNPPHGSPSTLRWFFNLFQLYRGPLDLTIIITGATDVDGMAWFTPVGLAVDTPWVEKQSALTIDYKTALGAIRFNTRRTGNIQIRLPWYSYLYAVSGALDGLGDTTDSTFGLVSIQIANYNHSDEYLSFSCYLSVTEQSEFFFPRAPLNSSAMMTSENMLDRIAGGDLESSVDDPRTDEDRRFESHIEKKPYKELRLEVGKQRFKYAREELSNEILPPPRKLKGLFSQSKIS</sequence>
<protein>
    <recommendedName>
        <fullName>Genome polyprotein</fullName>
    </recommendedName>
    <component>
        <recommendedName>
            <fullName>Capsid protein VP0</fullName>
        </recommendedName>
        <alternativeName>
            <fullName>VP4-VP2</fullName>
        </alternativeName>
    </component>
    <component>
        <recommendedName>
            <fullName>Capsid protein VP4</fullName>
        </recommendedName>
        <alternativeName>
            <fullName>P1A</fullName>
        </alternativeName>
        <alternativeName>
            <fullName>Virion protein 4</fullName>
        </alternativeName>
    </component>
    <component>
        <recommendedName>
            <fullName>Capsid protein VP2</fullName>
        </recommendedName>
        <alternativeName>
            <fullName>P1B</fullName>
        </alternativeName>
        <alternativeName>
            <fullName>Virion protein 2</fullName>
        </alternativeName>
    </component>
    <component>
        <recommendedName>
            <fullName>Capsid protein VP3</fullName>
        </recommendedName>
        <alternativeName>
            <fullName>P1C</fullName>
        </alternativeName>
        <alternativeName>
            <fullName>Virion protein 3</fullName>
        </alternativeName>
    </component>
    <component>
        <recommendedName>
            <fullName>Protein VP1-2A</fullName>
        </recommendedName>
        <alternativeName>
            <fullName>VPX</fullName>
        </alternativeName>
    </component>
    <component>
        <recommendedName>
            <fullName>Capsid protein VP1</fullName>
        </recommendedName>
        <alternativeName>
            <fullName>P1D</fullName>
        </alternativeName>
        <alternativeName>
            <fullName>Virion protein 1</fullName>
        </alternativeName>
    </component>
    <component>
        <recommendedName>
            <fullName>Assembly signal 2A</fullName>
        </recommendedName>
        <alternativeName>
            <fullName evidence="2">pX</fullName>
        </alternativeName>
    </component>
    <component>
        <recommendedName>
            <fullName>Protein 2BC</fullName>
        </recommendedName>
    </component>
    <component>
        <recommendedName>
            <fullName>Protein 2B</fullName>
            <shortName>P2B</shortName>
        </recommendedName>
    </component>
</protein>
<accession>P31788</accession>
<evidence type="ECO:0000250" key="1">
    <source>
        <dbReference type="UniProtKB" id="P03303"/>
    </source>
</evidence>
<evidence type="ECO:0000250" key="2">
    <source>
        <dbReference type="UniProtKB" id="P08617"/>
    </source>
</evidence>
<evidence type="ECO:0000255" key="3"/>
<evidence type="ECO:0000256" key="4">
    <source>
        <dbReference type="SAM" id="MobiDB-lite"/>
    </source>
</evidence>
<evidence type="ECO:0000305" key="5"/>
<proteinExistence type="inferred from homology"/>
<comment type="function">
    <molecule>Capsid protein VP1</molecule>
    <text evidence="2">Capsid proteins VP1, VP2, and VP3 form a closed capsid enclosing the viral positive strand RNA genome. All these proteins contain a beta-sheet structure called beta-barrel jelly roll. Together they form an icosahedral capsid (T=3) composed of 60 copies of each VP1, VP2, and VP3, with a diameter of approximately 300 Angstroms. VP1 is situated at the 12 fivefold axes, whereas VP2 and VP3 are located at the quasi-sixfold axes. The naked capsid interacts with the host receptor HAVCR1 to provide virion attachment to and probably entry into the target cell.</text>
</comment>
<comment type="function">
    <molecule>Capsid protein VP2</molecule>
    <text evidence="2">Capsid proteins VP1, VP2, and VP3 form a closed capsid enclosing the viral positive strand RNA genome. All these proteins contain a beta-sheet structure called beta-barrel jelly roll. Together they form an icosahedral capsid (T=3) composed of 60 copies of each VP1, VP2, and VP3, with a diameter of approximately 300 Angstroms. VP1 is situated at the 12 fivefold axes, whereas VP2 and VP3 are located at the quasi-sixfold axes. The naked capsid interacts with the host receptor HAVCR1 to provide virion attachment to and probably entry into the target cell.</text>
</comment>
<comment type="function">
    <molecule>Capsid protein VP3</molecule>
    <text evidence="2">Capsid proteins VP1, VP2, and VP3 form a closed capsid enclosing the viral positive strand RNA genome. All these proteins contain a beta-sheet structure called beta-barrel jelly roll. Together they form an icosahedral capsid (T=3) composed of 60 copies of each VP1, VP2, and VP3, with a diameter of approximately 300 Angstroms. VP1 is situated at the 12 fivefold axes, whereas VP2 and VP3 are located at the quasi-sixfold axes. The naked capsid interacts with the host receptor HAVCR1 to provide virion attachment to and probably entry into the target cell.</text>
</comment>
<comment type="function">
    <molecule>Capsid protein VP0</molecule>
    <text evidence="2">VP0 precursor is a component of the immature procapsids.</text>
</comment>
<comment type="function">
    <molecule>Capsid protein VP4</molecule>
    <text evidence="2">Plays a role in the assembly of the 12 pentamers into an icosahedral structure. Has not been detected in mature virions, supposedly owing to its small size.</text>
</comment>
<comment type="function">
    <molecule>Protein VP1-2A</molecule>
    <text evidence="2">Precursor component of immature procapsids that corresponds to an extended form of the structural protein VP1. After maturation, possibly by the host Cathepsin L, the assembly signal 2A is cleaved to give rise to the mature VP1 protein.</text>
</comment>
<comment type="function">
    <molecule>Protein 2BC</molecule>
    <text evidence="2">Affects membrane integrity and causes an increase in membrane permeability.</text>
</comment>
<comment type="function">
    <molecule>Protein 2B</molecule>
    <text evidence="2">Functions as a viroporin. Affects membrane integrity and causes an increase in membrane permeability. Involved in host intracellular membrane rearrangements probably to give rise to the viral factories. Does not disrupt calcium homeostasis or glycoprotein trafficking. Antagonizes the innate immune response of the host by suppressing IFN-beta synthesis, which it achieves by interfering with the RIG-I/IFIH1 pathway.</text>
</comment>
<comment type="subunit">
    <molecule>Protein 2B</molecule>
    <text evidence="2">Homodimer. Homomultimer; probably interacts with membranes in a multimeric form. Seems to assemble into amyloid-like fibers.</text>
</comment>
<comment type="subunit">
    <molecule>Protein VP1-2A</molecule>
    <text evidence="2">Homopentamer. Homooligomer.</text>
</comment>
<comment type="subunit">
    <molecule>Capsid protein VP1</molecule>
    <text evidence="2">Interacts with capsid protein VP2. Interacts with capsid protein VP3.</text>
</comment>
<comment type="subunit">
    <molecule>Capsid protein VP2</molecule>
    <text evidence="2">Interacts with capsid protein VP1. Interacts with capsid protein VP3.</text>
</comment>
<comment type="subunit">
    <molecule>Capsid protein VP3</molecule>
    <text evidence="2">Interacts with capsid protein VP1. Interacts with capsid protein VP2.</text>
</comment>
<comment type="subcellular location">
    <molecule>Capsid protein VP2</molecule>
    <subcellularLocation>
        <location evidence="2">Virion</location>
    </subcellularLocation>
    <subcellularLocation>
        <location evidence="2">Host endosome</location>
        <location evidence="2">Host multivesicular body</location>
    </subcellularLocation>
    <text evidence="2">The egress of newly formed virions occurs through an exosome-like mechanism involving endosomal budding of viral capsids into multivesicular bodies.</text>
</comment>
<comment type="subcellular location">
    <molecule>Capsid protein VP3</molecule>
    <subcellularLocation>
        <location evidence="2">Virion</location>
    </subcellularLocation>
    <subcellularLocation>
        <location evidence="2">Host endosome</location>
        <location evidence="2">Host multivesicular body</location>
    </subcellularLocation>
    <text evidence="2">The egress of newly formed virions occurs through an exosome-like mechanism involving endosomal budding of viral capsids into multivesicular bodies.</text>
</comment>
<comment type="subcellular location">
    <molecule>Capsid protein VP1</molecule>
    <subcellularLocation>
        <location evidence="2">Virion</location>
    </subcellularLocation>
    <subcellularLocation>
        <location evidence="2">Host endosome</location>
        <location evidence="2">Host multivesicular body</location>
    </subcellularLocation>
    <text evidence="2">The egress of newly formed virions occurs through an exosome-like mechanism involving endosomal budding of viral capsids into multivesicular bodies.</text>
</comment>
<comment type="subcellular location">
    <molecule>Capsid protein VP4</molecule>
    <subcellularLocation>
        <location evidence="2">Virion</location>
    </subcellularLocation>
    <text evidence="2">Present in the full mature virion. The egress of newly formed virions occurs through an exosome-like mechanism involving endosomal budding of viral capsids into multivesicular bodies.</text>
</comment>
<comment type="subcellular location">
    <molecule>Protein 2B</molecule>
    <subcellularLocation>
        <location evidence="2">Host membrane</location>
        <topology evidence="2">Peripheral membrane protein</topology>
    </subcellularLocation>
    <text evidence="2">Probably localizes to intracellular membrane vesicles that are induced after virus infection as the site for viral RNA replication.</text>
</comment>
<comment type="domain">
    <molecule>Protein VP1-2A</molecule>
    <text evidence="2">The assembly signal 2A region mediates pentamerization of P1-2A.</text>
</comment>
<comment type="domain">
    <molecule>Genome polyprotein</molecule>
    <text evidence="2">Late-budding domains (L domains) are short sequence motifs essential for viral particle budding. They recruit proteins of the host ESCRT machinery (Endosomal Sorting Complex Required for Transport) or ESCRT-associated proteins. The genome polyprotein contains two L domains: a tandem of (L)YPX(n)L domain which is known to bind the PDCD6IP/ALIX adaptater protein.</text>
</comment>
<comment type="domain">
    <molecule>Capsid protein VP2</molecule>
    <text evidence="2">Late-budding domains (L domains) are short sequence motifs essential for viral particle budding. They recruit proteins of the host ESCRT machinery (Endosomal Sorting Complex Required for Transport) or ESCRT-associated proteins. Capsid protein VP2 contains two L domains: a tandem of (L)YPX(n)L domain which is known to bind the Alix adaptater protein.</text>
</comment>
<comment type="domain">
    <molecule>Protein 2B</molecule>
    <text evidence="2">The C-terminus displays a membrane-penetrating ability.</text>
</comment>
<comment type="PTM">
    <molecule>Genome polyprotein</molecule>
    <text evidence="2">Specific enzymatic cleavages by viral protease in vivo yield a variety of precursors and mature proteins. Polyprotein processing intermediates are produced, such as P1-2A which is a functional precursor of the structural proteins, VP0 which is a VP4-VP2 precursor, VP1-2A precursor, 3ABC precursor which is a stable and catalytically active precursor of 3A, 3B and 3C proteins, 3AB and 3CD precursors. The assembly signal 2A is removed from VP1-2A by a host protease, possibly host Cathepsin L. This cleavage occurs over a region of 3 amino-acids probably generating VP1 proteins with heterogeneous C-termini.</text>
</comment>
<comment type="PTM">
    <molecule>Capsid protein VP0</molecule>
    <text evidence="1">During virion maturation, immature virions are rendered infectious following cleavage of VP0 into VP4 and VP2. This maturation seems to be an autocatalytic event triggered by the presence of RNA in the capsid and is followed by a conformational change of the particle.</text>
</comment>
<comment type="PTM">
    <molecule>Protein VP1-2A</molecule>
    <text evidence="2">The assembly signal 2A is removed from VP1-2A by a host protease, possibly host Cathepsin L in naked virions. This cleavage does not occur in enveloped virions. This cleavage occurs over a region of 3 amino-acids probably generating VP1 proteins with heterogeneous C-termini.</text>
</comment>
<comment type="PTM">
    <molecule>Capsid protein VP4</molecule>
    <text evidence="2">Unlike other picornaviruses, does not seem to be myristoylated.</text>
</comment>
<comment type="miscellaneous">
    <molecule>Genome polyprotein</molecule>
    <text evidence="2">The need for an intact eIF4G factor for the initiation of translation of HAV results in an inability to shut off host protein synthesis by a mechanism similar to that of other picornaviruses.</text>
</comment>
<comment type="miscellaneous">
    <molecule>Genome polyprotein</molecule>
    <text evidence="2">During infection, enveloped virions (eHAV) are released from cells. These eHAV are cloaked in host-derived membranes and resemble exosomes. The membrane of eHAV is devoid of viral proteins and thus prevents their neutralization by antibodies. eHAV budding is dependent on ESCRT-associated proteins VPS4B and PDCD6IP/ALIX. eHAV are produced and released in the serum and plasma, but not in bile and feces which only contain the naked, nonenveloped virions. It is likely that eHAV also use HAVCR1 as a functional receptor to infect cells, an evolutionary trait that may enhance HAV infectivity.</text>
</comment>
<comment type="similarity">
    <text evidence="5">Belongs to the picornaviridae polyprotein family.</text>
</comment>
<comment type="caution">
    <text evidence="2">It is uncertain whether Met-1 or Met-3 is the initiator.</text>
</comment>
<reference key="1">
    <citation type="journal article" date="1991" name="J. Gen. Virol.">
        <title>Sequence analysis of a new hepatitis A virus naturally infecting cynomolgus macaques (Macaca fascicularis).</title>
        <authorList>
            <person name="Nainan O.V."/>
            <person name="Margolis H.S."/>
            <person name="Robertson B.H."/>
            <person name="Balayan M."/>
            <person name="Brinton M.A."/>
        </authorList>
    </citation>
    <scope>NUCLEOTIDE SEQUENCE [GENOMIC RNA]</scope>
</reference>
<reference key="2">
    <citation type="journal article" date="1992" name="J. Gen. Virol.">
        <title>Genetic relatedness of hepatitis A virus strains recovered from different geographical regions.</title>
        <authorList>
            <person name="Robertson B.H."/>
            <person name="Jansen R.W."/>
            <person name="Khanna B."/>
            <person name="Totsuka A."/>
            <person name="Nainan O.V."/>
            <person name="Siegl G."/>
            <person name="Widell A."/>
            <person name="Margolis H.S."/>
            <person name="Isomura S."/>
            <person name="Ito K."/>
            <person name="Ishizu T."/>
            <person name="Moritsugu Y."/>
            <person name="Lemon S.M."/>
        </authorList>
    </citation>
    <scope>NUCLEOTIDE SEQUENCE [GENOMIC RNA] OF 764-818</scope>
</reference>
<organism>
    <name type="scientific">Simian hepatitis A virus genotype IV (isolate CY-145)</name>
    <name type="common">SHAV</name>
    <name type="synonym">Simian hepatitis A virus (isolate Macaca/Philippines/CY-145/1988)</name>
    <dbReference type="NCBI Taxonomy" id="31707"/>
    <lineage>
        <taxon>Viruses</taxon>
        <taxon>Riboviria</taxon>
        <taxon>Orthornavirae</taxon>
        <taxon>Pisuviricota</taxon>
        <taxon>Pisoniviricetes</taxon>
        <taxon>Picornavirales</taxon>
        <taxon>Picornaviridae</taxon>
        <taxon>Heptrevirinae</taxon>
        <taxon>Hepatovirus</taxon>
        <taxon>Hepatovirus ahepa</taxon>
        <taxon>Hepatovirus A</taxon>
    </lineage>
</organism>
<keyword id="KW-0167">Capsid protein</keyword>
<keyword id="KW-1039">Host endosome</keyword>
<keyword id="KW-1043">Host membrane</keyword>
<keyword id="KW-0945">Host-virus interaction</keyword>
<keyword id="KW-0407">Ion channel</keyword>
<keyword id="KW-0406">Ion transport</keyword>
<keyword id="KW-0472">Membrane</keyword>
<keyword id="KW-1143">T=pseudo3 icosahedral capsid protein</keyword>
<keyword id="KW-0813">Transport</keyword>
<keyword id="KW-1161">Viral attachment to host cell</keyword>
<keyword id="KW-1182">Viral ion channel</keyword>
<keyword id="KW-0946">Virion</keyword>
<keyword id="KW-1160">Virus entry into host cell</keyword>
<feature type="chain" id="PRO_0000311031" description="Genome polyprotein">
    <location>
        <begin position="1"/>
        <end position="839" status="greater than"/>
    </location>
</feature>
<feature type="chain" id="PRO_0000311032" description="Capsid protein VP0">
    <location>
        <begin position="1"/>
        <end position="245"/>
    </location>
</feature>
<feature type="chain" id="PRO_0000039990" description="Capsid protein VP4">
    <location>
        <begin position="1"/>
        <end position="23"/>
    </location>
</feature>
<feature type="chain" id="PRO_0000039991" description="Capsid protein VP2">
    <location>
        <begin position="24"/>
        <end position="245"/>
    </location>
</feature>
<feature type="chain" id="PRO_0000039992" description="Capsid protein VP3">
    <location>
        <begin position="246"/>
        <end position="491"/>
    </location>
</feature>
<feature type="chain" id="PRO_0000311033" description="Protein VP1-2A">
    <location>
        <begin position="492"/>
        <end position="835"/>
    </location>
</feature>
<feature type="chain" id="PRO_0000039993" description="Capsid protein VP1">
    <location>
        <begin position="492"/>
        <end position="765"/>
    </location>
</feature>
<feature type="chain" id="PRO_0000039994" description="Assembly signal 2A">
    <location>
        <begin position="766"/>
        <end position="835"/>
    </location>
</feature>
<feature type="chain" id="PRO_0000311034" description="Protein 2B">
    <location>
        <begin position="836"/>
        <end position="839" status="greater than"/>
    </location>
</feature>
<feature type="chain" id="PRO_0000311035" description="Protein 2BC">
    <location>
        <begin position="836"/>
        <end position="839" status="greater than"/>
    </location>
</feature>
<feature type="region of interest" description="Disordered" evidence="4">
    <location>
        <begin position="55"/>
        <end position="76"/>
    </location>
</feature>
<feature type="region of interest" description="Disordered" evidence="4">
    <location>
        <begin position="496"/>
        <end position="530"/>
    </location>
</feature>
<feature type="region of interest" description="Involved in P1-2A pentamerization" evidence="2">
    <location>
        <begin position="766"/>
        <end position="836"/>
    </location>
</feature>
<feature type="region of interest" description="Disordered" evidence="4">
    <location>
        <begin position="773"/>
        <end position="792"/>
    </location>
</feature>
<feature type="short sequence motif" description="(L)YPX(n)L motif" evidence="2">
    <location>
        <begin position="167"/>
        <end position="171"/>
    </location>
</feature>
<feature type="short sequence motif" description="(L)YPX(n)L motif" evidence="2">
    <location>
        <begin position="200"/>
        <end position="205"/>
    </location>
</feature>
<feature type="compositionally biased region" description="Polar residues" evidence="4">
    <location>
        <begin position="55"/>
        <end position="66"/>
    </location>
</feature>
<feature type="compositionally biased region" description="Polar residues" evidence="4">
    <location>
        <begin position="496"/>
        <end position="510"/>
    </location>
</feature>
<feature type="compositionally biased region" description="Basic and acidic residues" evidence="4">
    <location>
        <begin position="780"/>
        <end position="792"/>
    </location>
</feature>
<feature type="site" description="Cleavage" evidence="3">
    <location>
        <begin position="23"/>
        <end position="24"/>
    </location>
</feature>
<feature type="site" description="Cleavage; by protease 3C" evidence="2">
    <location>
        <begin position="245"/>
        <end position="246"/>
    </location>
</feature>
<feature type="site" description="Cleavage; by protease 3C" evidence="2">
    <location>
        <begin position="491"/>
        <end position="492"/>
    </location>
</feature>
<feature type="site" description="Cleavage; partial; by host" evidence="2">
    <location>
        <begin position="765"/>
        <end position="766"/>
    </location>
</feature>
<feature type="site" description="Important for VP1 folding and capsid assembly" evidence="2">
    <location>
        <position position="769"/>
    </location>
</feature>
<feature type="site" description="Cleavage; by protease 3C" evidence="2">
    <location>
        <begin position="835"/>
        <end position="836"/>
    </location>
</feature>
<feature type="non-terminal residue">
    <location>
        <position position="839"/>
    </location>
</feature>
<name>POLG_HAVSC</name>